<reference key="1">
    <citation type="journal article" date="1998" name="Antimicrob. Agents Chemother.">
        <title>Sulfonamide resistance in Streptococcus pyogenes is associated with differences in the amino acid sequence of its chromosomal dihydropteroate synthase.</title>
        <authorList>
            <person name="Swedberg G."/>
            <person name="Ringertz S."/>
            <person name="Skoeld O."/>
        </authorList>
    </citation>
    <scope>NUCLEOTIDE SEQUENCE [GENOMIC DNA]</scope>
    <source>
        <strain>G56</strain>
    </source>
</reference>
<sequence>MDKIVLEGCRFYGYHGAYKEEQTLGQIFLVDLELSVDLQAASLSSQLTDTVHYGMVFDSVRQLVEGEKFILIDGLAGAICEQLFNEFPPIEAIKVAIKKENPPIAGHYKAVGIELERQR</sequence>
<feature type="chain" id="PRO_0000168288" description="Dihydroneopterin aldolase">
    <location>
        <begin position="1"/>
        <end position="119"/>
    </location>
</feature>
<feature type="active site" description="Proton donor/acceptor" evidence="1">
    <location>
        <position position="99"/>
    </location>
</feature>
<feature type="binding site" evidence="1">
    <location>
        <position position="21"/>
    </location>
    <ligand>
        <name>substrate</name>
    </ligand>
</feature>
<feature type="binding site" evidence="1">
    <location>
        <position position="53"/>
    </location>
    <ligand>
        <name>substrate</name>
    </ligand>
</feature>
<feature type="binding site" evidence="1">
    <location>
        <begin position="72"/>
        <end position="73"/>
    </location>
    <ligand>
        <name>substrate</name>
    </ligand>
</feature>
<accession>P0C0G4</accession>
<accession>O33725</accession>
<accession>P0A3E1</accession>
<organism>
    <name type="scientific">Streptococcus pyogenes</name>
    <dbReference type="NCBI Taxonomy" id="1314"/>
    <lineage>
        <taxon>Bacteria</taxon>
        <taxon>Bacillati</taxon>
        <taxon>Bacillota</taxon>
        <taxon>Bacilli</taxon>
        <taxon>Lactobacillales</taxon>
        <taxon>Streptococcaceae</taxon>
        <taxon>Streptococcus</taxon>
    </lineage>
</organism>
<name>FOLB_STRPY</name>
<dbReference type="EC" id="4.1.2.25"/>
<dbReference type="EMBL" id="AJ000685">
    <property type="protein sequence ID" value="CAA04239.1"/>
    <property type="molecule type" value="Genomic_DNA"/>
</dbReference>
<dbReference type="SMR" id="P0C0G4"/>
<dbReference type="STRING" id="1314.SD89_04130"/>
<dbReference type="eggNOG" id="COG1539">
    <property type="taxonomic scope" value="Bacteria"/>
</dbReference>
<dbReference type="UniPathway" id="UPA00077">
    <property type="reaction ID" value="UER00154"/>
</dbReference>
<dbReference type="GO" id="GO:0005737">
    <property type="term" value="C:cytoplasm"/>
    <property type="evidence" value="ECO:0007669"/>
    <property type="project" value="TreeGrafter"/>
</dbReference>
<dbReference type="GO" id="GO:0004150">
    <property type="term" value="F:dihydroneopterin aldolase activity"/>
    <property type="evidence" value="ECO:0007669"/>
    <property type="project" value="UniProtKB-EC"/>
</dbReference>
<dbReference type="GO" id="GO:0046656">
    <property type="term" value="P:folic acid biosynthetic process"/>
    <property type="evidence" value="ECO:0007669"/>
    <property type="project" value="UniProtKB-KW"/>
</dbReference>
<dbReference type="GO" id="GO:0046654">
    <property type="term" value="P:tetrahydrofolate biosynthetic process"/>
    <property type="evidence" value="ECO:0007669"/>
    <property type="project" value="UniProtKB-UniPathway"/>
</dbReference>
<dbReference type="CDD" id="cd00534">
    <property type="entry name" value="DHNA_DHNTPE"/>
    <property type="match status" value="1"/>
</dbReference>
<dbReference type="FunFam" id="3.30.1130.10:FF:000003">
    <property type="entry name" value="7,8-dihydroneopterin aldolase"/>
    <property type="match status" value="1"/>
</dbReference>
<dbReference type="Gene3D" id="3.30.1130.10">
    <property type="match status" value="1"/>
</dbReference>
<dbReference type="InterPro" id="IPR006156">
    <property type="entry name" value="Dihydroneopterin_aldolase"/>
</dbReference>
<dbReference type="InterPro" id="IPR006157">
    <property type="entry name" value="FolB_dom"/>
</dbReference>
<dbReference type="InterPro" id="IPR043133">
    <property type="entry name" value="GTP-CH-I_C/QueF"/>
</dbReference>
<dbReference type="NCBIfam" id="TIGR00525">
    <property type="entry name" value="folB"/>
    <property type="match status" value="1"/>
</dbReference>
<dbReference type="NCBIfam" id="TIGR00526">
    <property type="entry name" value="folB_dom"/>
    <property type="match status" value="1"/>
</dbReference>
<dbReference type="PANTHER" id="PTHR42844">
    <property type="entry name" value="DIHYDRONEOPTERIN ALDOLASE 1-RELATED"/>
    <property type="match status" value="1"/>
</dbReference>
<dbReference type="PANTHER" id="PTHR42844:SF1">
    <property type="entry name" value="DIHYDRONEOPTERIN ALDOLASE 1-RELATED"/>
    <property type="match status" value="1"/>
</dbReference>
<dbReference type="Pfam" id="PF02152">
    <property type="entry name" value="FolB"/>
    <property type="match status" value="1"/>
</dbReference>
<dbReference type="SMART" id="SM00905">
    <property type="entry name" value="FolB"/>
    <property type="match status" value="1"/>
</dbReference>
<dbReference type="SUPFAM" id="SSF55620">
    <property type="entry name" value="Tetrahydrobiopterin biosynthesis enzymes-like"/>
    <property type="match status" value="1"/>
</dbReference>
<proteinExistence type="inferred from homology"/>
<keyword id="KW-0289">Folate biosynthesis</keyword>
<keyword id="KW-0456">Lyase</keyword>
<gene>
    <name type="primary">folB</name>
    <name type="synonym">folQ</name>
</gene>
<evidence type="ECO:0000250" key="1">
    <source>
        <dbReference type="UniProtKB" id="P0AC16"/>
    </source>
</evidence>
<evidence type="ECO:0000305" key="2"/>
<comment type="function">
    <text evidence="1">Catalyzes the conversion of 7,8-dihydroneopterin to 6-hydroxymethyl-7,8-dihydropterin.</text>
</comment>
<comment type="catalytic activity">
    <reaction evidence="1">
        <text>7,8-dihydroneopterin = 6-hydroxymethyl-7,8-dihydropterin + glycolaldehyde</text>
        <dbReference type="Rhea" id="RHEA:10540"/>
        <dbReference type="ChEBI" id="CHEBI:17001"/>
        <dbReference type="ChEBI" id="CHEBI:17071"/>
        <dbReference type="ChEBI" id="CHEBI:44841"/>
        <dbReference type="EC" id="4.1.2.25"/>
    </reaction>
</comment>
<comment type="pathway">
    <text>Cofactor biosynthesis; tetrahydrofolate biosynthesis; 2-amino-4-hydroxy-6-hydroxymethyl-7,8-dihydropteridine diphosphate from 7,8-dihydroneopterin triphosphate: step 3/4.</text>
</comment>
<comment type="similarity">
    <text evidence="2">Belongs to the DHNA family.</text>
</comment>
<protein>
    <recommendedName>
        <fullName>Dihydroneopterin aldolase</fullName>
        <shortName>DHNA</shortName>
        <ecNumber>4.1.2.25</ecNumber>
    </recommendedName>
    <alternativeName>
        <fullName>7,8-dihydroneopterin aldolase</fullName>
    </alternativeName>
</protein>